<sequence>MAKGGFPGFGGNINNLVKQAQKMQRDMERVQEELKEKTVEASAGGGAVTVVATGRKDIKEITIKPEVVDPDDVEMLQDLILAAVNEALRKADEMVTAEISKITGGLGGIPGLF</sequence>
<evidence type="ECO:0000255" key="1">
    <source>
        <dbReference type="HAMAP-Rule" id="MF_00274"/>
    </source>
</evidence>
<evidence type="ECO:0000269" key="2">
    <source ref="2"/>
</evidence>
<evidence type="ECO:0007829" key="3">
    <source>
        <dbReference type="PDB" id="1YBX"/>
    </source>
</evidence>
<dbReference type="EMBL" id="CP000568">
    <property type="protein sequence ID" value="ABN53347.1"/>
    <property type="molecule type" value="Genomic_DNA"/>
</dbReference>
<dbReference type="RefSeq" id="WP_003514292.1">
    <property type="nucleotide sequence ID" value="NC_009012.1"/>
</dbReference>
<dbReference type="PDB" id="1YBX">
    <property type="method" value="X-ray"/>
    <property type="resolution" value="1.80 A"/>
    <property type="chains" value="A/B=1-113"/>
</dbReference>
<dbReference type="PDBsum" id="1YBX"/>
<dbReference type="SMR" id="A3DHB8"/>
<dbReference type="STRING" id="203119.Cthe_2143"/>
<dbReference type="GeneID" id="35804609"/>
<dbReference type="KEGG" id="cth:Cthe_2143"/>
<dbReference type="eggNOG" id="COG0718">
    <property type="taxonomic scope" value="Bacteria"/>
</dbReference>
<dbReference type="HOGENOM" id="CLU_140930_1_0_9"/>
<dbReference type="OrthoDB" id="9795263at2"/>
<dbReference type="EvolutionaryTrace" id="A3DHB8"/>
<dbReference type="Proteomes" id="UP000002145">
    <property type="component" value="Chromosome"/>
</dbReference>
<dbReference type="GO" id="GO:0043590">
    <property type="term" value="C:bacterial nucleoid"/>
    <property type="evidence" value="ECO:0007669"/>
    <property type="project" value="UniProtKB-UniRule"/>
</dbReference>
<dbReference type="GO" id="GO:0005829">
    <property type="term" value="C:cytosol"/>
    <property type="evidence" value="ECO:0007669"/>
    <property type="project" value="TreeGrafter"/>
</dbReference>
<dbReference type="GO" id="GO:0003677">
    <property type="term" value="F:DNA binding"/>
    <property type="evidence" value="ECO:0007669"/>
    <property type="project" value="UniProtKB-UniRule"/>
</dbReference>
<dbReference type="FunFam" id="3.30.1310.10:FF:000002">
    <property type="entry name" value="Nucleoid-associated protein IKC_06587"/>
    <property type="match status" value="1"/>
</dbReference>
<dbReference type="Gene3D" id="3.30.1310.10">
    <property type="entry name" value="Nucleoid-associated protein YbaB-like domain"/>
    <property type="match status" value="1"/>
</dbReference>
<dbReference type="HAMAP" id="MF_00274">
    <property type="entry name" value="DNA_YbaB_EbfC"/>
    <property type="match status" value="1"/>
</dbReference>
<dbReference type="InterPro" id="IPR036894">
    <property type="entry name" value="YbaB-like_sf"/>
</dbReference>
<dbReference type="InterPro" id="IPR004401">
    <property type="entry name" value="YbaB/EbfC"/>
</dbReference>
<dbReference type="NCBIfam" id="TIGR00103">
    <property type="entry name" value="DNA_YbaB_EbfC"/>
    <property type="match status" value="1"/>
</dbReference>
<dbReference type="PANTHER" id="PTHR33449">
    <property type="entry name" value="NUCLEOID-ASSOCIATED PROTEIN YBAB"/>
    <property type="match status" value="1"/>
</dbReference>
<dbReference type="PANTHER" id="PTHR33449:SF1">
    <property type="entry name" value="NUCLEOID-ASSOCIATED PROTEIN YBAB"/>
    <property type="match status" value="1"/>
</dbReference>
<dbReference type="Pfam" id="PF02575">
    <property type="entry name" value="YbaB_DNA_bd"/>
    <property type="match status" value="1"/>
</dbReference>
<dbReference type="PIRSF" id="PIRSF004555">
    <property type="entry name" value="UCP004555"/>
    <property type="match status" value="1"/>
</dbReference>
<dbReference type="SUPFAM" id="SSF82607">
    <property type="entry name" value="YbaB-like"/>
    <property type="match status" value="1"/>
</dbReference>
<feature type="chain" id="PRO_1000003732" description="Nucleoid-associated protein Cthe_2143">
    <location>
        <begin position="1"/>
        <end position="113"/>
    </location>
</feature>
<feature type="helix" evidence="3">
    <location>
        <begin position="14"/>
        <end position="36"/>
    </location>
</feature>
<feature type="strand" evidence="3">
    <location>
        <begin position="38"/>
        <end position="43"/>
    </location>
</feature>
<feature type="turn" evidence="3">
    <location>
        <begin position="44"/>
        <end position="47"/>
    </location>
</feature>
<feature type="strand" evidence="3">
    <location>
        <begin position="48"/>
        <end position="53"/>
    </location>
</feature>
<feature type="strand" evidence="3">
    <location>
        <begin position="58"/>
        <end position="63"/>
    </location>
</feature>
<feature type="helix" evidence="3">
    <location>
        <begin position="65"/>
        <end position="67"/>
    </location>
</feature>
<feature type="helix" evidence="3">
    <location>
        <begin position="73"/>
        <end position="102"/>
    </location>
</feature>
<keyword id="KW-0002">3D-structure</keyword>
<keyword id="KW-0963">Cytoplasm</keyword>
<keyword id="KW-0238">DNA-binding</keyword>
<keyword id="KW-1185">Reference proteome</keyword>
<protein>
    <recommendedName>
        <fullName evidence="1">Nucleoid-associated protein Cthe_2143</fullName>
    </recommendedName>
</protein>
<reference key="1">
    <citation type="submission" date="2007-02" db="EMBL/GenBank/DDBJ databases">
        <title>Complete sequence of Clostridium thermocellum ATCC 27405.</title>
        <authorList>
            <consortium name="US DOE Joint Genome Institute"/>
            <person name="Copeland A."/>
            <person name="Lucas S."/>
            <person name="Lapidus A."/>
            <person name="Barry K."/>
            <person name="Detter J.C."/>
            <person name="Glavina del Rio T."/>
            <person name="Hammon N."/>
            <person name="Israni S."/>
            <person name="Dalin E."/>
            <person name="Tice H."/>
            <person name="Pitluck S."/>
            <person name="Chertkov O."/>
            <person name="Brettin T."/>
            <person name="Bruce D."/>
            <person name="Han C."/>
            <person name="Tapia R."/>
            <person name="Gilna P."/>
            <person name="Schmutz J."/>
            <person name="Larimer F."/>
            <person name="Land M."/>
            <person name="Hauser L."/>
            <person name="Kyrpides N."/>
            <person name="Mikhailova N."/>
            <person name="Wu J.H.D."/>
            <person name="Newcomb M."/>
            <person name="Richardson P."/>
        </authorList>
    </citation>
    <scope>NUCLEOTIDE SEQUENCE [LARGE SCALE GENOMIC DNA]</scope>
    <source>
        <strain>ATCC 27405 / DSM 1237 / JCM 9322 / NBRC 103400 / NCIMB 10682 / NRRL B-4536 / VPI 7372</strain>
    </source>
</reference>
<reference key="2">
    <citation type="submission" date="2011-07" db="PDB data bank">
        <title>Conserved hypothetical protein cth-383 from Clostridium thermocellum.</title>
        <authorList>
            <consortium name="Southeast collaboratory for structural genomics (SECSG)"/>
        </authorList>
    </citation>
    <scope>X-RAY CRYSTALLOGRAPHY (1.8 ANGSTROMS)</scope>
    <scope>SUBUNIT</scope>
    <source>
        <strain>ATCC 27405 / DSM 1237 / JCM 9322 / NBRC 103400 / NCIMB 10682 / NRRL B-4536 / VPI 7372</strain>
    </source>
</reference>
<gene>
    <name type="ordered locus">Cthe_2143</name>
</gene>
<name>Y2143_ACET2</name>
<accession>A3DHB8</accession>
<organism>
    <name type="scientific">Acetivibrio thermocellus (strain ATCC 27405 / DSM 1237 / JCM 9322 / NBRC 103400 / NCIMB 10682 / NRRL B-4536 / VPI 7372)</name>
    <name type="common">Clostridium thermocellum</name>
    <dbReference type="NCBI Taxonomy" id="203119"/>
    <lineage>
        <taxon>Bacteria</taxon>
        <taxon>Bacillati</taxon>
        <taxon>Bacillota</taxon>
        <taxon>Clostridia</taxon>
        <taxon>Eubacteriales</taxon>
        <taxon>Oscillospiraceae</taxon>
        <taxon>Acetivibrio</taxon>
    </lineage>
</organism>
<proteinExistence type="evidence at protein level"/>
<comment type="function">
    <text evidence="1">Binds to DNA and alters its conformation. May be involved in regulation of gene expression, nucleoid organization and DNA protection.</text>
</comment>
<comment type="subunit">
    <text evidence="1 2">Homodimer.</text>
</comment>
<comment type="subcellular location">
    <subcellularLocation>
        <location evidence="1">Cytoplasm</location>
        <location evidence="1">Nucleoid</location>
    </subcellularLocation>
</comment>
<comment type="similarity">
    <text evidence="1">Belongs to the YbaB/EbfC family.</text>
</comment>